<accession>B1X860</accession>
<feature type="chain" id="PRO_1000145831" description="Pyrimidine-specific ribonucleoside hydrolase RihB">
    <location>
        <begin position="1"/>
        <end position="313"/>
    </location>
</feature>
<feature type="active site" description="Proton acceptor" evidence="1">
    <location>
        <position position="11"/>
    </location>
</feature>
<feature type="binding site" evidence="1">
    <location>
        <position position="11"/>
    </location>
    <ligand>
        <name>Ca(2+)</name>
        <dbReference type="ChEBI" id="CHEBI:29108"/>
    </ligand>
</feature>
<feature type="binding site" evidence="1">
    <location>
        <position position="16"/>
    </location>
    <ligand>
        <name>Ca(2+)</name>
        <dbReference type="ChEBI" id="CHEBI:29108"/>
    </ligand>
</feature>
<feature type="binding site" evidence="1">
    <location>
        <position position="124"/>
    </location>
    <ligand>
        <name>Ca(2+)</name>
        <dbReference type="ChEBI" id="CHEBI:29108"/>
    </ligand>
</feature>
<feature type="binding site" evidence="1">
    <location>
        <position position="227"/>
    </location>
    <ligand>
        <name>substrate</name>
    </ligand>
</feature>
<feature type="binding site" evidence="1">
    <location>
        <position position="239"/>
    </location>
    <ligand>
        <name>substrate</name>
    </ligand>
</feature>
<feature type="binding site" evidence="1">
    <location>
        <position position="240"/>
    </location>
    <ligand>
        <name>Ca(2+)</name>
        <dbReference type="ChEBI" id="CHEBI:29108"/>
    </ligand>
</feature>
<evidence type="ECO:0000255" key="1">
    <source>
        <dbReference type="HAMAP-Rule" id="MF_01433"/>
    </source>
</evidence>
<protein>
    <recommendedName>
        <fullName evidence="1">Pyrimidine-specific ribonucleoside hydrolase RihB</fullName>
        <ecNumber evidence="1">3.2.2.8</ecNumber>
    </recommendedName>
    <alternativeName>
        <fullName evidence="1">Cytidine/uridine-specific hydrolase</fullName>
    </alternativeName>
</protein>
<reference key="1">
    <citation type="journal article" date="2008" name="J. Bacteriol.">
        <title>The complete genome sequence of Escherichia coli DH10B: insights into the biology of a laboratory workhorse.</title>
        <authorList>
            <person name="Durfee T."/>
            <person name="Nelson R."/>
            <person name="Baldwin S."/>
            <person name="Plunkett G. III"/>
            <person name="Burland V."/>
            <person name="Mau B."/>
            <person name="Petrosino J.F."/>
            <person name="Qin X."/>
            <person name="Muzny D.M."/>
            <person name="Ayele M."/>
            <person name="Gibbs R.A."/>
            <person name="Csorgo B."/>
            <person name="Posfai G."/>
            <person name="Weinstock G.M."/>
            <person name="Blattner F.R."/>
        </authorList>
    </citation>
    <scope>NUCLEOTIDE SEQUENCE [LARGE SCALE GENOMIC DNA]</scope>
    <source>
        <strain>K12 / DH10B</strain>
    </source>
</reference>
<sequence>MEKRKIILDCDPGHDDAIAIMMAAKHPAIDLLGITIVAGNQTLDKTLINGLNVCQKLEINVPVYAGMPQPIMRQQIVADNIHGETGLDGPVFEPLTRQAESTHAVKYIIDTLMASDGDITLVPVGPLSNIAVAMRMQPAILPKIREIVLMGGAYGTGNFTPSAEFNIFADPEAARVVFTSGVPLVMMGLDLTNQTVCTPDVIARMERAGGPAGELFSDIMNFTLKTQFENYGLAGGPVHDATCIGYLINPDGIKTQEMYVEVDVNSGPCYGRTVCDELGVLGKPANTKVGITIDTDWFWGLVEECVRGYIKTH</sequence>
<organism>
    <name type="scientific">Escherichia coli (strain K12 / DH10B)</name>
    <dbReference type="NCBI Taxonomy" id="316385"/>
    <lineage>
        <taxon>Bacteria</taxon>
        <taxon>Pseudomonadati</taxon>
        <taxon>Pseudomonadota</taxon>
        <taxon>Gammaproteobacteria</taxon>
        <taxon>Enterobacterales</taxon>
        <taxon>Enterobacteriaceae</taxon>
        <taxon>Escherichia</taxon>
    </lineage>
</organism>
<dbReference type="EC" id="3.2.2.8" evidence="1"/>
<dbReference type="EMBL" id="CP000948">
    <property type="protein sequence ID" value="ACB03326.1"/>
    <property type="molecule type" value="Genomic_DNA"/>
</dbReference>
<dbReference type="RefSeq" id="WP_000415429.1">
    <property type="nucleotide sequence ID" value="NC_010473.1"/>
</dbReference>
<dbReference type="SMR" id="B1X860"/>
<dbReference type="KEGG" id="ecd:ECDH10B_2319"/>
<dbReference type="HOGENOM" id="CLU_036838_2_0_6"/>
<dbReference type="GO" id="GO:0005829">
    <property type="term" value="C:cytosol"/>
    <property type="evidence" value="ECO:0007669"/>
    <property type="project" value="TreeGrafter"/>
</dbReference>
<dbReference type="GO" id="GO:0005509">
    <property type="term" value="F:calcium ion binding"/>
    <property type="evidence" value="ECO:0007669"/>
    <property type="project" value="UniProtKB-UniRule"/>
</dbReference>
<dbReference type="GO" id="GO:0008477">
    <property type="term" value="F:purine nucleosidase activity"/>
    <property type="evidence" value="ECO:0007669"/>
    <property type="project" value="TreeGrafter"/>
</dbReference>
<dbReference type="GO" id="GO:0045437">
    <property type="term" value="F:uridine nucleosidase activity"/>
    <property type="evidence" value="ECO:0007669"/>
    <property type="project" value="UniProtKB-ARBA"/>
</dbReference>
<dbReference type="GO" id="GO:0006152">
    <property type="term" value="P:purine nucleoside catabolic process"/>
    <property type="evidence" value="ECO:0007669"/>
    <property type="project" value="TreeGrafter"/>
</dbReference>
<dbReference type="GO" id="GO:0006206">
    <property type="term" value="P:pyrimidine nucleobase metabolic process"/>
    <property type="evidence" value="ECO:0007669"/>
    <property type="project" value="UniProtKB-UniRule"/>
</dbReference>
<dbReference type="GO" id="GO:0046133">
    <property type="term" value="P:pyrimidine ribonucleoside catabolic process"/>
    <property type="evidence" value="ECO:0007669"/>
    <property type="project" value="InterPro"/>
</dbReference>
<dbReference type="CDD" id="cd02651">
    <property type="entry name" value="nuc_hydro_IU_UC_XIUA"/>
    <property type="match status" value="1"/>
</dbReference>
<dbReference type="FunFam" id="3.90.245.10:FF:000003">
    <property type="entry name" value="Pyrimidine-specific ribonucleoside hydrolase RihB"/>
    <property type="match status" value="1"/>
</dbReference>
<dbReference type="Gene3D" id="3.90.245.10">
    <property type="entry name" value="Ribonucleoside hydrolase-like"/>
    <property type="match status" value="1"/>
</dbReference>
<dbReference type="HAMAP" id="MF_01433">
    <property type="entry name" value="Pyrim_hydro_RihB"/>
    <property type="match status" value="1"/>
</dbReference>
<dbReference type="InterPro" id="IPR015910">
    <property type="entry name" value="I/U_nuclsd_hydro_CS"/>
</dbReference>
<dbReference type="InterPro" id="IPR001910">
    <property type="entry name" value="Inosine/uridine_hydrolase_dom"/>
</dbReference>
<dbReference type="InterPro" id="IPR023186">
    <property type="entry name" value="IUNH"/>
</dbReference>
<dbReference type="InterPro" id="IPR022977">
    <property type="entry name" value="Pyrim_hydro_RihB"/>
</dbReference>
<dbReference type="InterPro" id="IPR036452">
    <property type="entry name" value="Ribo_hydro-like"/>
</dbReference>
<dbReference type="NCBIfam" id="NF007417">
    <property type="entry name" value="PRK09955.1"/>
    <property type="match status" value="1"/>
</dbReference>
<dbReference type="PANTHER" id="PTHR12304">
    <property type="entry name" value="INOSINE-URIDINE PREFERRING NUCLEOSIDE HYDROLASE"/>
    <property type="match status" value="1"/>
</dbReference>
<dbReference type="PANTHER" id="PTHR12304:SF4">
    <property type="entry name" value="URIDINE NUCLEOSIDASE"/>
    <property type="match status" value="1"/>
</dbReference>
<dbReference type="Pfam" id="PF01156">
    <property type="entry name" value="IU_nuc_hydro"/>
    <property type="match status" value="1"/>
</dbReference>
<dbReference type="SUPFAM" id="SSF53590">
    <property type="entry name" value="Nucleoside hydrolase"/>
    <property type="match status" value="1"/>
</dbReference>
<dbReference type="PROSITE" id="PS01247">
    <property type="entry name" value="IUNH"/>
    <property type="match status" value="1"/>
</dbReference>
<keyword id="KW-0106">Calcium</keyword>
<keyword id="KW-0326">Glycosidase</keyword>
<keyword id="KW-0378">Hydrolase</keyword>
<keyword id="KW-0479">Metal-binding</keyword>
<proteinExistence type="inferred from homology"/>
<gene>
    <name evidence="1" type="primary">rihB</name>
    <name type="ordered locus">ECDH10B_2319</name>
</gene>
<name>RIHB_ECODH</name>
<comment type="function">
    <text evidence="1">Hydrolyzes cytidine or uridine to ribose and cytosine or uracil, respectively. Has a clear preference for cytidine over uridine. Strictly specific for ribonucleosides.</text>
</comment>
<comment type="catalytic activity">
    <reaction evidence="1">
        <text>a pyrimidine ribonucleoside + H2O = a pyrimidine nucleobase + D-ribose</text>
        <dbReference type="Rhea" id="RHEA:56816"/>
        <dbReference type="ChEBI" id="CHEBI:15377"/>
        <dbReference type="ChEBI" id="CHEBI:26432"/>
        <dbReference type="ChEBI" id="CHEBI:47013"/>
        <dbReference type="ChEBI" id="CHEBI:141014"/>
        <dbReference type="EC" id="3.2.2.8"/>
    </reaction>
</comment>
<comment type="cofactor">
    <cofactor evidence="1">
        <name>Ca(2+)</name>
        <dbReference type="ChEBI" id="CHEBI:29108"/>
    </cofactor>
    <text evidence="1">Binds 1 Ca(2+) ion per monomer.</text>
</comment>
<comment type="subunit">
    <text evidence="1">Homotetramer.</text>
</comment>
<comment type="similarity">
    <text evidence="1">Belongs to the IUNH family. RihB subfamily.</text>
</comment>